<dbReference type="EMBL" id="AF494277">
    <property type="protein sequence ID" value="AAM12874.1"/>
    <property type="molecule type" value="Genomic_DNA"/>
</dbReference>
<dbReference type="EMBL" id="CP000909">
    <property type="protein sequence ID" value="ABY36436.1"/>
    <property type="molecule type" value="Genomic_DNA"/>
</dbReference>
<dbReference type="PIR" id="B42418">
    <property type="entry name" value="B42418"/>
</dbReference>
<dbReference type="RefSeq" id="WP_012259089.1">
    <property type="nucleotide sequence ID" value="NC_010175.1"/>
</dbReference>
<dbReference type="RefSeq" id="YP_001636825.1">
    <property type="nucleotide sequence ID" value="NC_010175.1"/>
</dbReference>
<dbReference type="PDB" id="2AAN">
    <property type="method" value="X-ray"/>
    <property type="resolution" value="1.85 A"/>
    <property type="chains" value="A=24-162"/>
</dbReference>
<dbReference type="PDBsum" id="2AAN"/>
<dbReference type="SMR" id="Q8RMH6"/>
<dbReference type="STRING" id="324602.Caur_3248"/>
<dbReference type="EnsemblBacteria" id="ABY36436">
    <property type="protein sequence ID" value="ABY36436"/>
    <property type="gene ID" value="Caur_3248"/>
</dbReference>
<dbReference type="KEGG" id="cau:Caur_3248"/>
<dbReference type="PATRIC" id="fig|324602.8.peg.3667"/>
<dbReference type="eggNOG" id="COG3241">
    <property type="taxonomic scope" value="Bacteria"/>
</dbReference>
<dbReference type="HOGENOM" id="CLU_112845_2_0_0"/>
<dbReference type="InParanoid" id="Q8RMH6"/>
<dbReference type="EvolutionaryTrace" id="Q8RMH6"/>
<dbReference type="Proteomes" id="UP000002008">
    <property type="component" value="Chromosome"/>
</dbReference>
<dbReference type="GO" id="GO:0005886">
    <property type="term" value="C:plasma membrane"/>
    <property type="evidence" value="ECO:0000318"/>
    <property type="project" value="GO_Central"/>
</dbReference>
<dbReference type="GO" id="GO:0005507">
    <property type="term" value="F:copper ion binding"/>
    <property type="evidence" value="ECO:0000318"/>
    <property type="project" value="GO_Central"/>
</dbReference>
<dbReference type="GO" id="GO:0009055">
    <property type="term" value="F:electron transfer activity"/>
    <property type="evidence" value="ECO:0007669"/>
    <property type="project" value="InterPro"/>
</dbReference>
<dbReference type="GO" id="GO:0016491">
    <property type="term" value="F:oxidoreductase activity"/>
    <property type="evidence" value="ECO:0000314"/>
    <property type="project" value="UniProtKB"/>
</dbReference>
<dbReference type="GO" id="GO:0009767">
    <property type="term" value="P:photosynthetic electron transport chain"/>
    <property type="evidence" value="ECO:0000314"/>
    <property type="project" value="UniProtKB"/>
</dbReference>
<dbReference type="CDD" id="cd13843">
    <property type="entry name" value="Azurin_like"/>
    <property type="match status" value="1"/>
</dbReference>
<dbReference type="FunFam" id="2.60.40.420:FF:000145">
    <property type="entry name" value="Auracyanin-A"/>
    <property type="match status" value="1"/>
</dbReference>
<dbReference type="Gene3D" id="2.60.40.420">
    <property type="entry name" value="Cupredoxins - blue copper proteins"/>
    <property type="match status" value="1"/>
</dbReference>
<dbReference type="InterPro" id="IPR000923">
    <property type="entry name" value="BlueCu_1"/>
</dbReference>
<dbReference type="InterPro" id="IPR028871">
    <property type="entry name" value="BlueCu_1_BS"/>
</dbReference>
<dbReference type="InterPro" id="IPR050845">
    <property type="entry name" value="Cu-binding_ET"/>
</dbReference>
<dbReference type="InterPro" id="IPR008972">
    <property type="entry name" value="Cupredoxin"/>
</dbReference>
<dbReference type="PANTHER" id="PTHR38439">
    <property type="entry name" value="AURACYANIN-B"/>
    <property type="match status" value="1"/>
</dbReference>
<dbReference type="PANTHER" id="PTHR38439:SF2">
    <property type="entry name" value="OUTER MEMBRANE PROTEIN H.8"/>
    <property type="match status" value="1"/>
</dbReference>
<dbReference type="Pfam" id="PF00127">
    <property type="entry name" value="Copper-bind"/>
    <property type="match status" value="1"/>
</dbReference>
<dbReference type="SUPFAM" id="SSF49503">
    <property type="entry name" value="Cupredoxins"/>
    <property type="match status" value="1"/>
</dbReference>
<dbReference type="PROSITE" id="PS00196">
    <property type="entry name" value="COPPER_BLUE"/>
    <property type="match status" value="1"/>
</dbReference>
<dbReference type="PROSITE" id="PS51257">
    <property type="entry name" value="PROKAR_LIPOPROTEIN"/>
    <property type="match status" value="1"/>
</dbReference>
<feature type="signal peptide" evidence="2 3">
    <location>
        <begin position="1"/>
        <end position="22"/>
    </location>
</feature>
<feature type="chain" id="PRO_0000252039" description="Auracyanin-A">
    <location>
        <begin position="23"/>
        <end position="162"/>
    </location>
</feature>
<feature type="domain" description="Plastocyanin-like" evidence="1">
    <location>
        <begin position="42"/>
        <end position="162"/>
    </location>
</feature>
<feature type="binding site" evidence="5">
    <location>
        <position position="81"/>
    </location>
    <ligand>
        <name>Cu cation</name>
        <dbReference type="ChEBI" id="CHEBI:23378"/>
    </ligand>
</feature>
<feature type="binding site" evidence="5">
    <location>
        <position position="146"/>
    </location>
    <ligand>
        <name>Cu cation</name>
        <dbReference type="ChEBI" id="CHEBI:23378"/>
    </ligand>
</feature>
<feature type="binding site" evidence="5">
    <location>
        <position position="151"/>
    </location>
    <ligand>
        <name>Cu cation</name>
        <dbReference type="ChEBI" id="CHEBI:23378"/>
    </ligand>
</feature>
<feature type="binding site" evidence="5">
    <location>
        <position position="155"/>
    </location>
    <ligand>
        <name>Cu cation</name>
        <dbReference type="ChEBI" id="CHEBI:23378"/>
    </ligand>
</feature>
<feature type="lipid moiety-binding region" description="N-palmitoyl cysteine" evidence="8">
    <location>
        <position position="23"/>
    </location>
</feature>
<feature type="lipid moiety-binding region" description="S-diacylglycerol cysteine" evidence="8">
    <location>
        <position position="23"/>
    </location>
</feature>
<feature type="strand" evidence="11">
    <location>
        <begin position="42"/>
        <end position="48"/>
    </location>
</feature>
<feature type="strand" evidence="11">
    <location>
        <begin position="52"/>
        <end position="56"/>
    </location>
</feature>
<feature type="strand" evidence="11">
    <location>
        <begin position="58"/>
        <end position="63"/>
    </location>
</feature>
<feature type="strand" evidence="11">
    <location>
        <begin position="67"/>
        <end position="73"/>
    </location>
</feature>
<feature type="strand" evidence="11">
    <location>
        <begin position="84"/>
        <end position="88"/>
    </location>
</feature>
<feature type="helix" evidence="11">
    <location>
        <begin position="90"/>
        <end position="103"/>
    </location>
</feature>
<feature type="helix" evidence="11">
    <location>
        <begin position="105"/>
        <end position="107"/>
    </location>
</feature>
<feature type="strand" evidence="11">
    <location>
        <begin position="117"/>
        <end position="120"/>
    </location>
</feature>
<feature type="strand" evidence="11">
    <location>
        <begin position="129"/>
        <end position="135"/>
    </location>
</feature>
<feature type="strand" evidence="11">
    <location>
        <begin position="138"/>
        <end position="145"/>
    </location>
</feature>
<feature type="turn" evidence="11">
    <location>
        <begin position="149"/>
        <end position="154"/>
    </location>
</feature>
<feature type="strand" evidence="11">
    <location>
        <begin position="155"/>
        <end position="162"/>
    </location>
</feature>
<protein>
    <recommendedName>
        <fullName>Auracyanin-A</fullName>
    </recommendedName>
</protein>
<accession>Q8RMH6</accession>
<accession>A9WIX7</accession>
<accession>Q3DWS6</accession>
<accession>Q7M1C1</accession>
<sequence length="162" mass="16371">MKITLRMMVLAVLTAMAMVLAACGGGGSSGGSTGGGSGSGPVTIEIGSKGEELAFDKTELTVSAGQTVTIRFKNNSAVQQHNWILVKGGEAEAANIANAGLSAGPAANYLPADKSNIIAESPLANGNETVEVTFTAPAAGTYLYICTVPGHYPLMQGKLVVN</sequence>
<gene>
    <name type="ordered locus">Caur_3248</name>
</gene>
<evidence type="ECO:0000255" key="1"/>
<evidence type="ECO:0000255" key="2">
    <source>
        <dbReference type="PROSITE-ProRule" id="PRU00303"/>
    </source>
</evidence>
<evidence type="ECO:0000269" key="3">
    <source>
    </source>
</evidence>
<evidence type="ECO:0000269" key="4">
    <source>
    </source>
</evidence>
<evidence type="ECO:0000269" key="5">
    <source>
    </source>
</evidence>
<evidence type="ECO:0000269" key="6">
    <source>
    </source>
</evidence>
<evidence type="ECO:0000269" key="7">
    <source>
    </source>
</evidence>
<evidence type="ECO:0000305" key="8"/>
<evidence type="ECO:0000312" key="9">
    <source>
        <dbReference type="EMBL" id="AAM12874.1"/>
    </source>
</evidence>
<evidence type="ECO:0000312" key="10">
    <source>
        <dbReference type="PIR" id="B42418"/>
    </source>
</evidence>
<evidence type="ECO:0007829" key="11">
    <source>
        <dbReference type="PDB" id="2AAN"/>
    </source>
</evidence>
<keyword id="KW-0002">3D-structure</keyword>
<keyword id="KW-1003">Cell membrane</keyword>
<keyword id="KW-0186">Copper</keyword>
<keyword id="KW-0903">Direct protein sequencing</keyword>
<keyword id="KW-0249">Electron transport</keyword>
<keyword id="KW-0449">Lipoprotein</keyword>
<keyword id="KW-0472">Membrane</keyword>
<keyword id="KW-0479">Metal-binding</keyword>
<keyword id="KW-0564">Palmitate</keyword>
<keyword id="KW-1185">Reference proteome</keyword>
<keyword id="KW-0732">Signal</keyword>
<keyword id="KW-0813">Transport</keyword>
<proteinExistence type="evidence at protein level"/>
<comment type="function">
    <text>Probably a soluble electron acceptor for the integral membrane protein electron transfer alternative complex III (ACIII).</text>
</comment>
<comment type="cofactor">
    <cofactor evidence="5">
        <name>Cu cation</name>
        <dbReference type="ChEBI" id="CHEBI:23378"/>
    </cofactor>
    <text evidence="5">Binds 1 copper ion per subunit.</text>
</comment>
<comment type="biophysicochemical properties">
    <redoxPotential>
        <text evidence="4">E(0) is +190 mV at pH 9, +205 mV at pH 7 and +240 mV at pH 4.</text>
    </redoxPotential>
</comment>
<comment type="subunit">
    <text evidence="5">Monomer.</text>
</comment>
<comment type="subcellular location">
    <subcellularLocation>
        <location evidence="8">Cell membrane</location>
        <topology evidence="8">Lipid-anchor</topology>
    </subcellularLocation>
    <text>Possibly located on the extracellular face of the cell membrane.</text>
</comment>
<comment type="induction">
    <text evidence="5 6 7">Present in photosynthetically (anaerobically) but not dark (aerobic respiration) grown cells (at protein level). Apparently unprocessed protein is also present, its quantities increase with culture age (PubMed:19190939). A later paper showed this protein to be present in both chemoheterotrophically (dark) and photoheterotrophically (light) grown cells, but with more protein present in dark grown cells (PubMed:22249883). The second report is thought to be correct (PubMed:23357331).</text>
</comment>
<comment type="mass spectrometry" mass="14128.0" method="FAB" evidence="3"/>
<comment type="similarity">
    <text evidence="1">Belongs to the multicopper oxidase family.</text>
</comment>
<organism>
    <name type="scientific">Chloroflexus aurantiacus (strain ATCC 29366 / DSM 635 / J-10-fl)</name>
    <dbReference type="NCBI Taxonomy" id="324602"/>
    <lineage>
        <taxon>Bacteria</taxon>
        <taxon>Bacillati</taxon>
        <taxon>Chloroflexota</taxon>
        <taxon>Chloroflexia</taxon>
        <taxon>Chloroflexales</taxon>
        <taxon>Chloroflexineae</taxon>
        <taxon>Chloroflexaceae</taxon>
        <taxon>Chloroflexus</taxon>
    </lineage>
</organism>
<name>AURA_CHLAA</name>
<reference evidence="8 9" key="1">
    <citation type="submission" date="2002-03" db="EMBL/GenBank/DDBJ databases">
        <authorList>
            <person name="Blankenship R.E."/>
            <person name="Lince M.T."/>
            <person name="Hiller R.G."/>
        </authorList>
    </citation>
    <scope>NUCLEOTIDE SEQUENCE [GENOMIC DNA]</scope>
    <source>
        <strain evidence="9">ATCC 29366 / DSM 635 / J-10-fl</strain>
    </source>
</reference>
<reference key="2">
    <citation type="journal article" date="2011" name="BMC Genomics">
        <title>Complete genome sequence of the filamentous anoxygenic phototrophic bacterium Chloroflexus aurantiacus.</title>
        <authorList>
            <person name="Tang K.H."/>
            <person name="Barry K."/>
            <person name="Chertkov O."/>
            <person name="Dalin E."/>
            <person name="Han C.S."/>
            <person name="Hauser L.J."/>
            <person name="Honchak B.M."/>
            <person name="Karbach L.E."/>
            <person name="Land M.L."/>
            <person name="Lapidus A."/>
            <person name="Larimer F.W."/>
            <person name="Mikhailova N."/>
            <person name="Pitluck S."/>
            <person name="Pierson B.K."/>
            <person name="Blankenship R.E."/>
        </authorList>
    </citation>
    <scope>NUCLEOTIDE SEQUENCE [LARGE SCALE GENOMIC DNA]</scope>
    <source>
        <strain>ATCC 29366 / DSM 635 / J-10-fl</strain>
    </source>
</reference>
<reference evidence="8 10" key="3">
    <citation type="journal article" date="1999" name="Protein Sci.">
        <title>Auracyanin A from the thermophilic green gliding photosynthetic bacterium Chloroflexus aurantiacus represents an unusual class of small blue copper proteins.</title>
        <authorList>
            <person name="Van Driessche G."/>
            <person name="Hu W."/>
            <person name="Van de Werken G."/>
            <person name="Selvaraj F."/>
            <person name="McManus J.D."/>
            <person name="Blankenship R.E."/>
            <person name="Van Beeumen J.J."/>
        </authorList>
    </citation>
    <scope>PROTEIN SEQUENCE OF 23-162</scope>
    <scope>MASS SPECTROMETRY</scope>
</reference>
<reference evidence="8" key="4">
    <citation type="journal article" date="2003" name="J. Biol. Inorg. Chem.">
        <title>A thin-film electrochemical study of the 'blue' copper proteins, auracyanin A and auracyanin B, from the photosynthetic bacterium Chloroflexus aurantiacus: the reduction potential as a function of pH.</title>
        <authorList>
            <person name="Rooney M.B."/>
            <person name="Honeychurch M.J."/>
            <person name="Selvaraj F.M."/>
            <person name="Blankenship R.E."/>
            <person name="Bond A.M."/>
            <person name="Freeman H.C."/>
        </authorList>
    </citation>
    <scope>BIOPHYSICOCHEMICAL PROPERTIES</scope>
</reference>
<reference key="5">
    <citation type="journal article" date="2012" name="Photosyn. Res.">
        <title>Comparison of Chloroflexus aurantiacus strain J-10-fl proteomes of cells grown chemoheterotrophically and photoheterotrophically.</title>
        <authorList>
            <person name="Cao L."/>
            <person name="Bryant D.A."/>
            <person name="Schepmoes A.A."/>
            <person name="Vogl K."/>
            <person name="Smith R.D."/>
            <person name="Lipton M.S."/>
            <person name="Callister S.J."/>
        </authorList>
    </citation>
    <scope>INDUCTION</scope>
    <scope>IDENTIFICATION BY MASS SPECTROMETRY</scope>
</reference>
<reference key="6">
    <citation type="journal article" date="2013" name="Biochim. Biophys. Acta">
        <title>Alternative Complex III from phototrophic bacteria and its electron acceptor auracyanin.</title>
        <authorList>
            <person name="Majumder E.L."/>
            <person name="King J.D."/>
            <person name="Blankenship R.E."/>
        </authorList>
    </citation>
    <scope>REVIEW</scope>
</reference>
<reference key="7">
    <citation type="journal article" date="2009" name="J. Biol. Inorg. Chem.">
        <title>The crystal structure of auracyanin A at 1.85 A resolution: the structures and functions of auracyanins A and B, two almost identical 'blue' copper proteins, in the photosynthetic bacterium Chloroflexus aurantiacus.</title>
        <authorList>
            <person name="Lee M."/>
            <person name="del Rosario M.C."/>
            <person name="Harris H.H."/>
            <person name="Blankenship R.E."/>
            <person name="Guss J.M."/>
            <person name="Freeman H.C."/>
        </authorList>
    </citation>
    <scope>X-RAY CRYSTALLOGRAPHY (1.85 ANGSTROMS) OF 40-162 IN COMPLEX WITH COPPER</scope>
    <scope>COFACTOR</scope>
    <scope>SUBUNIT</scope>
    <scope>INDUCTION</scope>
    <source>
        <strain>ATCC 29366 / DSM 635 / J-10-fl</strain>
    </source>
</reference>